<dbReference type="EMBL" id="AC079674">
    <property type="protein sequence ID" value="AAG51773.1"/>
    <property type="molecule type" value="Genomic_DNA"/>
</dbReference>
<dbReference type="EMBL" id="CP002684">
    <property type="protein sequence ID" value="AEE32479.1"/>
    <property type="molecule type" value="Genomic_DNA"/>
</dbReference>
<dbReference type="PIR" id="H96534">
    <property type="entry name" value="H96534"/>
</dbReference>
<dbReference type="RefSeq" id="NP_175403.1">
    <property type="nucleotide sequence ID" value="NM_103868.2"/>
</dbReference>
<dbReference type="SMR" id="Q9C6D3"/>
<dbReference type="STRING" id="3702.Q9C6D3"/>
<dbReference type="PaxDb" id="3702-AT1G49810.1"/>
<dbReference type="EnsemblPlants" id="AT1G49810.1">
    <property type="protein sequence ID" value="AT1G49810.1"/>
    <property type="gene ID" value="AT1G49810"/>
</dbReference>
<dbReference type="GeneID" id="841404"/>
<dbReference type="Gramene" id="AT1G49810.1">
    <property type="protein sequence ID" value="AT1G49810.1"/>
    <property type="gene ID" value="AT1G49810"/>
</dbReference>
<dbReference type="KEGG" id="ath:AT1G49810"/>
<dbReference type="Araport" id="AT1G49810"/>
<dbReference type="TAIR" id="AT1G49810">
    <property type="gene designation" value="NHD2"/>
</dbReference>
<dbReference type="eggNOG" id="ENOG502QQAH">
    <property type="taxonomic scope" value="Eukaryota"/>
</dbReference>
<dbReference type="HOGENOM" id="CLU_029697_1_0_1"/>
<dbReference type="InParanoid" id="Q9C6D3"/>
<dbReference type="OMA" id="LDAHIAN"/>
<dbReference type="PhylomeDB" id="Q9C6D3"/>
<dbReference type="PRO" id="PR:Q9C6D3"/>
<dbReference type="Proteomes" id="UP000006548">
    <property type="component" value="Chromosome 1"/>
</dbReference>
<dbReference type="ExpressionAtlas" id="Q9C6D3">
    <property type="expression patterns" value="baseline and differential"/>
</dbReference>
<dbReference type="GO" id="GO:0016020">
    <property type="term" value="C:membrane"/>
    <property type="evidence" value="ECO:0007669"/>
    <property type="project" value="UniProtKB-SubCell"/>
</dbReference>
<dbReference type="GO" id="GO:0015297">
    <property type="term" value="F:antiporter activity"/>
    <property type="evidence" value="ECO:0007669"/>
    <property type="project" value="UniProtKB-KW"/>
</dbReference>
<dbReference type="GO" id="GO:0006814">
    <property type="term" value="P:sodium ion transport"/>
    <property type="evidence" value="ECO:0007669"/>
    <property type="project" value="UniProtKB-KW"/>
</dbReference>
<dbReference type="InterPro" id="IPR004680">
    <property type="entry name" value="Cit_transptr-like_dom"/>
</dbReference>
<dbReference type="InterPro" id="IPR045016">
    <property type="entry name" value="NhaD-like"/>
</dbReference>
<dbReference type="NCBIfam" id="NF038006">
    <property type="entry name" value="NhaD_1"/>
    <property type="match status" value="1"/>
</dbReference>
<dbReference type="PANTHER" id="PTHR43269">
    <property type="entry name" value="SODIUM/PROTON ANTIPORTER 1-RELATED"/>
    <property type="match status" value="1"/>
</dbReference>
<dbReference type="PANTHER" id="PTHR43269:SF2">
    <property type="entry name" value="SODIUM_PROTON ANTIPORTER 1-RELATED"/>
    <property type="match status" value="1"/>
</dbReference>
<dbReference type="Pfam" id="PF03600">
    <property type="entry name" value="CitMHS"/>
    <property type="match status" value="1"/>
</dbReference>
<protein>
    <recommendedName>
        <fullName evidence="3">Sodium/proton antiporter 2</fullName>
        <shortName evidence="3">AtNHD2</shortName>
        <shortName evidence="3">Na(+)/H(+) antiporter 2</shortName>
    </recommendedName>
</protein>
<feature type="chain" id="PRO_0000437698" description="Sodium/proton antiporter 2">
    <location>
        <begin position="1"/>
        <end position="420"/>
    </location>
</feature>
<feature type="transmembrane region" description="Helical" evidence="2">
    <location>
        <begin position="25"/>
        <end position="45"/>
    </location>
</feature>
<feature type="transmembrane region" description="Helical" evidence="2">
    <location>
        <begin position="60"/>
        <end position="80"/>
    </location>
</feature>
<feature type="transmembrane region" description="Helical" evidence="2">
    <location>
        <begin position="94"/>
        <end position="114"/>
    </location>
</feature>
<feature type="transmembrane region" description="Helical" evidence="2">
    <location>
        <begin position="136"/>
        <end position="156"/>
    </location>
</feature>
<feature type="transmembrane region" description="Helical" evidence="2">
    <location>
        <begin position="173"/>
        <end position="193"/>
    </location>
</feature>
<feature type="transmembrane region" description="Helical" evidence="2">
    <location>
        <begin position="221"/>
        <end position="241"/>
    </location>
</feature>
<feature type="transmembrane region" description="Helical" evidence="2">
    <location>
        <begin position="242"/>
        <end position="262"/>
    </location>
</feature>
<feature type="transmembrane region" description="Helical" evidence="2">
    <location>
        <begin position="285"/>
        <end position="305"/>
    </location>
</feature>
<feature type="transmembrane region" description="Helical" evidence="2">
    <location>
        <begin position="321"/>
        <end position="341"/>
    </location>
</feature>
<feature type="transmembrane region" description="Helical" evidence="2">
    <location>
        <begin position="363"/>
        <end position="383"/>
    </location>
</feature>
<feature type="transmembrane region" description="Helical" evidence="2">
    <location>
        <begin position="400"/>
        <end position="420"/>
    </location>
</feature>
<keyword id="KW-0050">Antiport</keyword>
<keyword id="KW-0406">Ion transport</keyword>
<keyword id="KW-0472">Membrane</keyword>
<keyword id="KW-1185">Reference proteome</keyword>
<keyword id="KW-0915">Sodium</keyword>
<keyword id="KW-0739">Sodium transport</keyword>
<keyword id="KW-0812">Transmembrane</keyword>
<keyword id="KW-1133">Transmembrane helix</keyword>
<keyword id="KW-0813">Transport</keyword>
<reference key="1">
    <citation type="journal article" date="2000" name="Nature">
        <title>Sequence and analysis of chromosome 1 of the plant Arabidopsis thaliana.</title>
        <authorList>
            <person name="Theologis A."/>
            <person name="Ecker J.R."/>
            <person name="Palm C.J."/>
            <person name="Federspiel N.A."/>
            <person name="Kaul S."/>
            <person name="White O."/>
            <person name="Alonso J."/>
            <person name="Altafi H."/>
            <person name="Araujo R."/>
            <person name="Bowman C.L."/>
            <person name="Brooks S.Y."/>
            <person name="Buehler E."/>
            <person name="Chan A."/>
            <person name="Chao Q."/>
            <person name="Chen H."/>
            <person name="Cheuk R.F."/>
            <person name="Chin C.W."/>
            <person name="Chung M.K."/>
            <person name="Conn L."/>
            <person name="Conway A.B."/>
            <person name="Conway A.R."/>
            <person name="Creasy T.H."/>
            <person name="Dewar K."/>
            <person name="Dunn P."/>
            <person name="Etgu P."/>
            <person name="Feldblyum T.V."/>
            <person name="Feng J.-D."/>
            <person name="Fong B."/>
            <person name="Fujii C.Y."/>
            <person name="Gill J.E."/>
            <person name="Goldsmith A.D."/>
            <person name="Haas B."/>
            <person name="Hansen N.F."/>
            <person name="Hughes B."/>
            <person name="Huizar L."/>
            <person name="Hunter J.L."/>
            <person name="Jenkins J."/>
            <person name="Johnson-Hopson C."/>
            <person name="Khan S."/>
            <person name="Khaykin E."/>
            <person name="Kim C.J."/>
            <person name="Koo H.L."/>
            <person name="Kremenetskaia I."/>
            <person name="Kurtz D.B."/>
            <person name="Kwan A."/>
            <person name="Lam B."/>
            <person name="Langin-Hooper S."/>
            <person name="Lee A."/>
            <person name="Lee J.M."/>
            <person name="Lenz C.A."/>
            <person name="Li J.H."/>
            <person name="Li Y.-P."/>
            <person name="Lin X."/>
            <person name="Liu S.X."/>
            <person name="Liu Z.A."/>
            <person name="Luros J.S."/>
            <person name="Maiti R."/>
            <person name="Marziali A."/>
            <person name="Militscher J."/>
            <person name="Miranda M."/>
            <person name="Nguyen M."/>
            <person name="Nierman W.C."/>
            <person name="Osborne B.I."/>
            <person name="Pai G."/>
            <person name="Peterson J."/>
            <person name="Pham P.K."/>
            <person name="Rizzo M."/>
            <person name="Rooney T."/>
            <person name="Rowley D."/>
            <person name="Sakano H."/>
            <person name="Salzberg S.L."/>
            <person name="Schwartz J.R."/>
            <person name="Shinn P."/>
            <person name="Southwick A.M."/>
            <person name="Sun H."/>
            <person name="Tallon L.J."/>
            <person name="Tambunga G."/>
            <person name="Toriumi M.J."/>
            <person name="Town C.D."/>
            <person name="Utterback T."/>
            <person name="Van Aken S."/>
            <person name="Vaysberg M."/>
            <person name="Vysotskaia V.S."/>
            <person name="Walker M."/>
            <person name="Wu D."/>
            <person name="Yu G."/>
            <person name="Fraser C.M."/>
            <person name="Venter J.C."/>
            <person name="Davis R.W."/>
        </authorList>
    </citation>
    <scope>NUCLEOTIDE SEQUENCE [LARGE SCALE GENOMIC DNA]</scope>
    <source>
        <strain>cv. Columbia</strain>
    </source>
</reference>
<reference key="2">
    <citation type="journal article" date="2017" name="Plant J.">
        <title>Araport11: a complete reannotation of the Arabidopsis thaliana reference genome.</title>
        <authorList>
            <person name="Cheng C.Y."/>
            <person name="Krishnakumar V."/>
            <person name="Chan A.P."/>
            <person name="Thibaud-Nissen F."/>
            <person name="Schobel S."/>
            <person name="Town C.D."/>
        </authorList>
    </citation>
    <scope>GENOME REANNOTATION</scope>
    <source>
        <strain>cv. Columbia</strain>
    </source>
</reference>
<reference key="3">
    <citation type="journal article" date="2001" name="Plant Physiol.">
        <title>Phylogenetic relationships within cation transporter families of Arabidopsis.</title>
        <authorList>
            <person name="Maeser P."/>
            <person name="Thomine S."/>
            <person name="Schroeder J.I."/>
            <person name="Ward J.M."/>
            <person name="Hirschi K."/>
            <person name="Sze H."/>
            <person name="Talke I.N."/>
            <person name="Amtmann A."/>
            <person name="Maathuis F.J.M."/>
            <person name="Sanders D."/>
            <person name="Harper J.F."/>
            <person name="Tchieu J."/>
            <person name="Gribskov M."/>
            <person name="Persans M.W."/>
            <person name="Salt D.E."/>
            <person name="Kim S.A."/>
            <person name="Guerinot M.L."/>
        </authorList>
    </citation>
    <scope>REVIEW</scope>
    <scope>GENE FAMILY</scope>
    <scope>NOMENCLATURE</scope>
</reference>
<comment type="function">
    <text evidence="1">Na(+)/H(+) antiporter that extrudes sodium in exchange for external protons.</text>
</comment>
<comment type="subcellular location">
    <subcellularLocation>
        <location evidence="2">Membrane</location>
        <topology evidence="2">Multi-pass membrane protein</topology>
    </subcellularLocation>
</comment>
<comment type="similarity">
    <text evidence="4">Belongs to the NhaD Na(+)/H(+) (TC 2.A.62) antiporter family.</text>
</comment>
<evidence type="ECO:0000250" key="1">
    <source>
        <dbReference type="UniProtKB" id="Q9LT68"/>
    </source>
</evidence>
<evidence type="ECO:0000255" key="2"/>
<evidence type="ECO:0000303" key="3">
    <source>
    </source>
</evidence>
<evidence type="ECO:0000305" key="4"/>
<evidence type="ECO:0000312" key="5">
    <source>
        <dbReference type="Araport" id="AT1G49810"/>
    </source>
</evidence>
<evidence type="ECO:0000312" key="6">
    <source>
        <dbReference type="EMBL" id="AAG51773.1"/>
    </source>
</evidence>
<sequence length="420" mass="45447">MALLFGIGYVLIIFEESLSFSKSGIALLMAVSLWVVRSIETSVEIVTLELQHATSEVSQIVFYMLGAMTIVEIIDAHQGFKLVTDCITSRKPKILLWVIGFATFFLSSVLDNLTSTIVMVSLLRRLIPPSEYRKLLGAVVVIAANAGGAWTPIGDVTTTMLWIHGHISTFSTIKNLFLPSAISLVVPLALMSLTSEVHGMGLNTPPTPLLAYDRSAPRGKLVFGVGFGALLFVPLFKSLTGLPPYMGILLGLGVIWILTDVIHYGDLERQHLKLPHALSRIDSQGALFFLGILLSMSSLDAAGILKVIANYLDAHIANVELIASIIGVVSAIIDNVPLVAATMGMYDLSTFPQDSEFWQLISFCAGTGGSMLITGSAAGVIFMSMEKVNFFWYFRKVSGFAFAGFTAGIMTYLAVHNFPL</sequence>
<accession>Q9C6D3</accession>
<proteinExistence type="inferred from homology"/>
<name>NHD2_ARATH</name>
<gene>
    <name evidence="3" type="primary">NHD2</name>
    <name evidence="5" type="ordered locus">At1g49810</name>
    <name evidence="6" type="ORF">F10F5.6</name>
</gene>
<organism>
    <name type="scientific">Arabidopsis thaliana</name>
    <name type="common">Mouse-ear cress</name>
    <dbReference type="NCBI Taxonomy" id="3702"/>
    <lineage>
        <taxon>Eukaryota</taxon>
        <taxon>Viridiplantae</taxon>
        <taxon>Streptophyta</taxon>
        <taxon>Embryophyta</taxon>
        <taxon>Tracheophyta</taxon>
        <taxon>Spermatophyta</taxon>
        <taxon>Magnoliopsida</taxon>
        <taxon>eudicotyledons</taxon>
        <taxon>Gunneridae</taxon>
        <taxon>Pentapetalae</taxon>
        <taxon>rosids</taxon>
        <taxon>malvids</taxon>
        <taxon>Brassicales</taxon>
        <taxon>Brassicaceae</taxon>
        <taxon>Camelineae</taxon>
        <taxon>Arabidopsis</taxon>
    </lineage>
</organism>